<dbReference type="EMBL" id="M31838">
    <property type="protein sequence ID" value="AAA42150.1"/>
    <property type="molecule type" value="mRNA"/>
</dbReference>
<dbReference type="PIR" id="A36737">
    <property type="entry name" value="A36737"/>
</dbReference>
<dbReference type="RefSeq" id="NP_542946.1">
    <property type="nucleotide sequence ID" value="NM_080768.1"/>
</dbReference>
<dbReference type="SMR" id="P16610"/>
<dbReference type="FunCoup" id="P16610">
    <property type="interactions" value="107"/>
</dbReference>
<dbReference type="STRING" id="10116.ENSRNOP00000067266"/>
<dbReference type="BindingDB" id="P16610"/>
<dbReference type="ChEMBL" id="CHEMBL4554"/>
<dbReference type="GuidetoPHARMACOLOGY" id="361"/>
<dbReference type="GlyCosmos" id="P16610">
    <property type="glycosylation" value="1 site, No reported glycans"/>
</dbReference>
<dbReference type="GlyGen" id="P16610">
    <property type="glycosylation" value="1 site"/>
</dbReference>
<dbReference type="iPTMnet" id="P16610"/>
<dbReference type="PhosphoSitePlus" id="P16610"/>
<dbReference type="PaxDb" id="10116-ENSRNOP00000067266"/>
<dbReference type="Ensembl" id="ENSRNOT00000071394.2">
    <property type="protein sequence ID" value="ENSRNOP00000067266.1"/>
    <property type="gene ID" value="ENSRNOG00000050658.2"/>
</dbReference>
<dbReference type="GeneID" id="25007"/>
<dbReference type="KEGG" id="rno:25007"/>
<dbReference type="AGR" id="RGD:3812"/>
<dbReference type="CTD" id="6865"/>
<dbReference type="RGD" id="3812">
    <property type="gene designation" value="Tacr2"/>
</dbReference>
<dbReference type="eggNOG" id="KOG4219">
    <property type="taxonomic scope" value="Eukaryota"/>
</dbReference>
<dbReference type="GeneTree" id="ENSGT00940000155512"/>
<dbReference type="HOGENOM" id="CLU_009579_6_1_1"/>
<dbReference type="InParanoid" id="P16610"/>
<dbReference type="OMA" id="RRVNRCH"/>
<dbReference type="OrthoDB" id="5981855at2759"/>
<dbReference type="PhylomeDB" id="P16610"/>
<dbReference type="Reactome" id="R-RNO-380095">
    <property type="pathway name" value="Tachykinin receptors bind tachykinins"/>
</dbReference>
<dbReference type="Reactome" id="R-RNO-416476">
    <property type="pathway name" value="G alpha (q) signalling events"/>
</dbReference>
<dbReference type="PRO" id="PR:P16610"/>
<dbReference type="Proteomes" id="UP000002494">
    <property type="component" value="Chromosome 20"/>
</dbReference>
<dbReference type="Bgee" id="ENSRNOG00000050658">
    <property type="expression patterns" value="Expressed in colon and 7 other cell types or tissues"/>
</dbReference>
<dbReference type="GO" id="GO:0005886">
    <property type="term" value="C:plasma membrane"/>
    <property type="evidence" value="ECO:0000318"/>
    <property type="project" value="GO_Central"/>
</dbReference>
<dbReference type="GO" id="GO:0036126">
    <property type="term" value="C:sperm flagellum"/>
    <property type="evidence" value="ECO:0000266"/>
    <property type="project" value="RGD"/>
</dbReference>
<dbReference type="GO" id="GO:0061827">
    <property type="term" value="C:sperm head"/>
    <property type="evidence" value="ECO:0000266"/>
    <property type="project" value="RGD"/>
</dbReference>
<dbReference type="GO" id="GO:0097225">
    <property type="term" value="C:sperm midpiece"/>
    <property type="evidence" value="ECO:0000266"/>
    <property type="project" value="RGD"/>
</dbReference>
<dbReference type="GO" id="GO:0016497">
    <property type="term" value="F:substance K receptor activity"/>
    <property type="evidence" value="ECO:0000314"/>
    <property type="project" value="RGD"/>
</dbReference>
<dbReference type="GO" id="GO:0014827">
    <property type="term" value="P:intestine smooth muscle contraction"/>
    <property type="evidence" value="ECO:0000315"/>
    <property type="project" value="RGD"/>
</dbReference>
<dbReference type="GO" id="GO:0033685">
    <property type="term" value="P:negative regulation of luteinizing hormone secretion"/>
    <property type="evidence" value="ECO:0000315"/>
    <property type="project" value="RGD"/>
</dbReference>
<dbReference type="GO" id="GO:0035106">
    <property type="term" value="P:operant conditioning"/>
    <property type="evidence" value="ECO:0000315"/>
    <property type="project" value="RGD"/>
</dbReference>
<dbReference type="GO" id="GO:0014057">
    <property type="term" value="P:positive regulation of acetylcholine secretion, neurotransmission"/>
    <property type="evidence" value="ECO:0000315"/>
    <property type="project" value="RGD"/>
</dbReference>
<dbReference type="GO" id="GO:1902093">
    <property type="term" value="P:positive regulation of flagellated sperm motility"/>
    <property type="evidence" value="ECO:0000266"/>
    <property type="project" value="RGD"/>
</dbReference>
<dbReference type="GO" id="GO:0043270">
    <property type="term" value="P:positive regulation of monoatomic ion transport"/>
    <property type="evidence" value="ECO:0000315"/>
    <property type="project" value="RGD"/>
</dbReference>
<dbReference type="GO" id="GO:0070474">
    <property type="term" value="P:positive regulation of uterine smooth muscle contraction"/>
    <property type="evidence" value="ECO:0000314"/>
    <property type="project" value="RGD"/>
</dbReference>
<dbReference type="GO" id="GO:0043117">
    <property type="term" value="P:positive regulation of vascular permeability"/>
    <property type="evidence" value="ECO:0000315"/>
    <property type="project" value="RGD"/>
</dbReference>
<dbReference type="GO" id="GO:0070459">
    <property type="term" value="P:prolactin secretion"/>
    <property type="evidence" value="ECO:0000315"/>
    <property type="project" value="RGD"/>
</dbReference>
<dbReference type="GO" id="GO:0070472">
    <property type="term" value="P:regulation of uterine smooth muscle contraction"/>
    <property type="evidence" value="ECO:0000266"/>
    <property type="project" value="RGD"/>
</dbReference>
<dbReference type="GO" id="GO:0051602">
    <property type="term" value="P:response to electrical stimulus"/>
    <property type="evidence" value="ECO:0000270"/>
    <property type="project" value="RGD"/>
</dbReference>
<dbReference type="CDD" id="cd16004">
    <property type="entry name" value="7tmA_SKR_NK2R"/>
    <property type="match status" value="1"/>
</dbReference>
<dbReference type="FunFam" id="1.20.1070.10:FF:000224">
    <property type="entry name" value="Tachykinin receptor 2"/>
    <property type="match status" value="1"/>
</dbReference>
<dbReference type="Gene3D" id="1.20.1070.10">
    <property type="entry name" value="Rhodopsin 7-helix transmembrane proteins"/>
    <property type="match status" value="1"/>
</dbReference>
<dbReference type="InterPro" id="IPR000276">
    <property type="entry name" value="GPCR_Rhodpsn"/>
</dbReference>
<dbReference type="InterPro" id="IPR017452">
    <property type="entry name" value="GPCR_Rhodpsn_7TM"/>
</dbReference>
<dbReference type="InterPro" id="IPR001681">
    <property type="entry name" value="Neurokn_rcpt"/>
</dbReference>
<dbReference type="InterPro" id="IPR000913">
    <property type="entry name" value="NK2_rcpt"/>
</dbReference>
<dbReference type="PANTHER" id="PTHR46925">
    <property type="entry name" value="G-PROTEIN COUPLED RECEPTOR TKR-1-RELATED"/>
    <property type="match status" value="1"/>
</dbReference>
<dbReference type="PANTHER" id="PTHR46925:SF3">
    <property type="entry name" value="SUBSTANCE-K RECEPTOR"/>
    <property type="match status" value="1"/>
</dbReference>
<dbReference type="Pfam" id="PF00001">
    <property type="entry name" value="7tm_1"/>
    <property type="match status" value="1"/>
</dbReference>
<dbReference type="PRINTS" id="PR00237">
    <property type="entry name" value="GPCRRHODOPSN"/>
</dbReference>
<dbReference type="PRINTS" id="PR01025">
    <property type="entry name" value="NEUROKININ2R"/>
</dbReference>
<dbReference type="PRINTS" id="PR00244">
    <property type="entry name" value="NEUROKININR"/>
</dbReference>
<dbReference type="SUPFAM" id="SSF81321">
    <property type="entry name" value="Family A G protein-coupled receptor-like"/>
    <property type="match status" value="1"/>
</dbReference>
<dbReference type="PROSITE" id="PS00237">
    <property type="entry name" value="G_PROTEIN_RECEP_F1_1"/>
    <property type="match status" value="1"/>
</dbReference>
<dbReference type="PROSITE" id="PS50262">
    <property type="entry name" value="G_PROTEIN_RECEP_F1_2"/>
    <property type="match status" value="1"/>
</dbReference>
<evidence type="ECO:0000255" key="1"/>
<evidence type="ECO:0000255" key="2">
    <source>
        <dbReference type="PROSITE-ProRule" id="PRU00521"/>
    </source>
</evidence>
<evidence type="ECO:0000256" key="3">
    <source>
        <dbReference type="SAM" id="MobiDB-lite"/>
    </source>
</evidence>
<accession>P16610</accession>
<protein>
    <recommendedName>
        <fullName>Substance-K receptor</fullName>
        <shortName>SKR</shortName>
    </recommendedName>
    <alternativeName>
        <fullName>NK-2 receptor</fullName>
        <shortName>NK-2R</shortName>
    </alternativeName>
    <alternativeName>
        <fullName>Neurokinin A receptor</fullName>
    </alternativeName>
    <alternativeName>
        <fullName>Tachykinin receptor 2</fullName>
    </alternativeName>
</protein>
<comment type="function">
    <text>This is a receptor for the tachykinin neuropeptide substance K (neurokinin A). It is associated with G proteins that activate a phosphatidylinositol-calcium second messenger system. The rank order of affinity of this receptor to tachykinins is: substance K &gt; neuromedin-K &gt; substance P.</text>
</comment>
<comment type="subcellular location">
    <subcellularLocation>
        <location>Cell membrane</location>
        <topology>Multi-pass membrane protein</topology>
    </subcellularLocation>
</comment>
<comment type="similarity">
    <text evidence="2">Belongs to the G-protein coupled receptor 1 family.</text>
</comment>
<sequence length="390" mass="43853">MGTRAIVSDANILSGLESNATGVTAFSMPGWQLALWATAYLALVLVAVTGNATVIWIILAHERMRTVTNYFIINLALADLCMAAFNATFNFIYASHNIWYFGRAFCYFQNLFPITAMFVSIYSMTAIAADRYMAIVHPFQPRLSAPSTKAIIAGIWLVALALASPQCFYSTITVDEGATKCVVAWPNDNGGKMLLLYHLVVFVLIYFLPLLVMFGAYSVIGLTLWKRAVPRHQAHGANLRHLQAKKKFVKAMVLVVLTFAICWLPYHLYFILGTFQEDIYYHKFIQQVYLALFWLAMSSTMYNPIIYCCLNHRFRSGFRLAFRCCPWVTPTEEDRLELTHTPSLSRRVNRCHTKETLFMTGDMTHSEATNGQVGSPQDGEPAGPICKAQA</sequence>
<reference key="1">
    <citation type="journal article" date="1989" name="Biochem. Biophys. Res. Commun.">
        <title>Molecular characterization of rat substance K receptor and its mRNAs.</title>
        <authorList>
            <person name="Sasai Y."/>
            <person name="Nakanishi S."/>
        </authorList>
    </citation>
    <scope>NUCLEOTIDE SEQUENCE [MRNA]</scope>
</reference>
<proteinExistence type="evidence at transcript level"/>
<gene>
    <name type="primary">Tacr2</name>
    <name type="synonym">Tac2r</name>
</gene>
<organism>
    <name type="scientific">Rattus norvegicus</name>
    <name type="common">Rat</name>
    <dbReference type="NCBI Taxonomy" id="10116"/>
    <lineage>
        <taxon>Eukaryota</taxon>
        <taxon>Metazoa</taxon>
        <taxon>Chordata</taxon>
        <taxon>Craniata</taxon>
        <taxon>Vertebrata</taxon>
        <taxon>Euteleostomi</taxon>
        <taxon>Mammalia</taxon>
        <taxon>Eutheria</taxon>
        <taxon>Euarchontoglires</taxon>
        <taxon>Glires</taxon>
        <taxon>Rodentia</taxon>
        <taxon>Myomorpha</taxon>
        <taxon>Muroidea</taxon>
        <taxon>Muridae</taxon>
        <taxon>Murinae</taxon>
        <taxon>Rattus</taxon>
    </lineage>
</organism>
<keyword id="KW-1003">Cell membrane</keyword>
<keyword id="KW-1015">Disulfide bond</keyword>
<keyword id="KW-0297">G-protein coupled receptor</keyword>
<keyword id="KW-0325">Glycoprotein</keyword>
<keyword id="KW-0449">Lipoprotein</keyword>
<keyword id="KW-0472">Membrane</keyword>
<keyword id="KW-0564">Palmitate</keyword>
<keyword id="KW-0675">Receptor</keyword>
<keyword id="KW-1185">Reference proteome</keyword>
<keyword id="KW-0807">Transducer</keyword>
<keyword id="KW-0812">Transmembrane</keyword>
<keyword id="KW-1133">Transmembrane helix</keyword>
<feature type="chain" id="PRO_0000069897" description="Substance-K receptor">
    <location>
        <begin position="1"/>
        <end position="390"/>
    </location>
</feature>
<feature type="topological domain" description="Extracellular" evidence="1">
    <location>
        <begin position="1"/>
        <end position="32"/>
    </location>
</feature>
<feature type="transmembrane region" description="Helical; Name=1" evidence="1">
    <location>
        <begin position="33"/>
        <end position="56"/>
    </location>
</feature>
<feature type="topological domain" description="Cytoplasmic" evidence="1">
    <location>
        <begin position="57"/>
        <end position="69"/>
    </location>
</feature>
<feature type="transmembrane region" description="Helical; Name=2" evidence="1">
    <location>
        <begin position="70"/>
        <end position="90"/>
    </location>
</feature>
<feature type="topological domain" description="Extracellular" evidence="1">
    <location>
        <begin position="91"/>
        <end position="107"/>
    </location>
</feature>
<feature type="transmembrane region" description="Helical; Name=3" evidence="1">
    <location>
        <begin position="108"/>
        <end position="129"/>
    </location>
</feature>
<feature type="topological domain" description="Cytoplasmic" evidence="1">
    <location>
        <begin position="130"/>
        <end position="149"/>
    </location>
</feature>
<feature type="transmembrane region" description="Helical; Name=4" evidence="1">
    <location>
        <begin position="150"/>
        <end position="170"/>
    </location>
</feature>
<feature type="topological domain" description="Extracellular" evidence="1">
    <location>
        <begin position="171"/>
        <end position="196"/>
    </location>
</feature>
<feature type="transmembrane region" description="Helical; Name=5" evidence="1">
    <location>
        <begin position="197"/>
        <end position="218"/>
    </location>
</feature>
<feature type="topological domain" description="Cytoplasmic" evidence="1">
    <location>
        <begin position="219"/>
        <end position="251"/>
    </location>
</feature>
<feature type="transmembrane region" description="Helical; Name=6" evidence="1">
    <location>
        <begin position="252"/>
        <end position="272"/>
    </location>
</feature>
<feature type="topological domain" description="Extracellular" evidence="1">
    <location>
        <begin position="273"/>
        <end position="290"/>
    </location>
</feature>
<feature type="transmembrane region" description="Helical; Name=7" evidence="1">
    <location>
        <begin position="291"/>
        <end position="310"/>
    </location>
</feature>
<feature type="topological domain" description="Cytoplasmic" evidence="1">
    <location>
        <begin position="311"/>
        <end position="390"/>
    </location>
</feature>
<feature type="region of interest" description="Disordered" evidence="3">
    <location>
        <begin position="365"/>
        <end position="390"/>
    </location>
</feature>
<feature type="compositionally biased region" description="Polar residues" evidence="3">
    <location>
        <begin position="366"/>
        <end position="375"/>
    </location>
</feature>
<feature type="lipid moiety-binding region" description="S-palmitoyl cysteine" evidence="1">
    <location>
        <position position="324"/>
    </location>
</feature>
<feature type="glycosylation site" description="N-linked (GlcNAc...) asparagine" evidence="1">
    <location>
        <position position="19"/>
    </location>
</feature>
<feature type="disulfide bond" evidence="2">
    <location>
        <begin position="106"/>
        <end position="181"/>
    </location>
</feature>
<name>NK2R_RAT</name>